<evidence type="ECO:0000255" key="1">
    <source>
        <dbReference type="HAMAP-Rule" id="MF_00195"/>
    </source>
</evidence>
<name>DER_ACTPJ</name>
<sequence length="506" mass="56161">MTPVVALVGRPNVGKSTLFNRLTRTRDALVADFPGLTRDRKYGHANIAGYNFIVIDTGGIDGTEEGVEEKMAEQSLLAIEEADVVLFLVDARAGLVPADIGIAQYLRQREKTTVVVANKTDGIDADSHCAEFYQLGLGEVEQIAAAQGRGVTQLIDQVLAPLGEQLNADQAVENEENSANEEADEWDTDFDFENEDDTALLDEALEEETEESIEDKNIKIAIVGRPNVGKSTLTNRILGEERVVVYDMPGTTRDSIYIPMERDGQQYTIIDTAGVRKRGKVNLAVEKFSVIKTLQAIQDANVVLLTIDAREGISDQDLSLLGFILNAGRSLVIVVNKWDGLSQDIKDQVKSELDRRLDFIDFARVHFISALHGSGVGNLFDSVKEAYACATQKTSTSMLTRILRMAADEHQPPLVNGRRVKLKYAHPGGYNPPIIVIHGNQVEKLADSYKRYLSNYFRKSLKIIGSPIRIQFQEGNNPFAGKKNKLTPSQLRKRKRLMKFIKKSKK</sequence>
<dbReference type="EMBL" id="CP000687">
    <property type="protein sequence ID" value="ABY69013.1"/>
    <property type="molecule type" value="Genomic_DNA"/>
</dbReference>
<dbReference type="RefSeq" id="WP_012262809.1">
    <property type="nucleotide sequence ID" value="NC_010278.1"/>
</dbReference>
<dbReference type="SMR" id="B0BTQ8"/>
<dbReference type="KEGG" id="apj:APJL_0424"/>
<dbReference type="HOGENOM" id="CLU_016077_5_1_6"/>
<dbReference type="Proteomes" id="UP000008547">
    <property type="component" value="Chromosome"/>
</dbReference>
<dbReference type="GO" id="GO:0016887">
    <property type="term" value="F:ATP hydrolysis activity"/>
    <property type="evidence" value="ECO:0007669"/>
    <property type="project" value="InterPro"/>
</dbReference>
<dbReference type="GO" id="GO:0005525">
    <property type="term" value="F:GTP binding"/>
    <property type="evidence" value="ECO:0007669"/>
    <property type="project" value="UniProtKB-UniRule"/>
</dbReference>
<dbReference type="GO" id="GO:0043022">
    <property type="term" value="F:ribosome binding"/>
    <property type="evidence" value="ECO:0007669"/>
    <property type="project" value="TreeGrafter"/>
</dbReference>
<dbReference type="GO" id="GO:0042254">
    <property type="term" value="P:ribosome biogenesis"/>
    <property type="evidence" value="ECO:0007669"/>
    <property type="project" value="UniProtKB-KW"/>
</dbReference>
<dbReference type="CDD" id="cd01894">
    <property type="entry name" value="EngA1"/>
    <property type="match status" value="1"/>
</dbReference>
<dbReference type="CDD" id="cd01895">
    <property type="entry name" value="EngA2"/>
    <property type="match status" value="1"/>
</dbReference>
<dbReference type="FunFam" id="3.30.300.20:FF:000004">
    <property type="entry name" value="GTPase Der"/>
    <property type="match status" value="1"/>
</dbReference>
<dbReference type="FunFam" id="3.40.50.300:FF:000040">
    <property type="entry name" value="GTPase Der"/>
    <property type="match status" value="1"/>
</dbReference>
<dbReference type="FunFam" id="3.40.50.300:FF:000057">
    <property type="entry name" value="GTPase Der"/>
    <property type="match status" value="1"/>
</dbReference>
<dbReference type="Gene3D" id="3.30.300.20">
    <property type="match status" value="1"/>
</dbReference>
<dbReference type="Gene3D" id="3.40.50.300">
    <property type="entry name" value="P-loop containing nucleotide triphosphate hydrolases"/>
    <property type="match status" value="2"/>
</dbReference>
<dbReference type="HAMAP" id="MF_00195">
    <property type="entry name" value="GTPase_Der"/>
    <property type="match status" value="1"/>
</dbReference>
<dbReference type="InterPro" id="IPR003593">
    <property type="entry name" value="AAA+_ATPase"/>
</dbReference>
<dbReference type="InterPro" id="IPR031166">
    <property type="entry name" value="G_ENGA"/>
</dbReference>
<dbReference type="InterPro" id="IPR006073">
    <property type="entry name" value="GTP-bd"/>
</dbReference>
<dbReference type="InterPro" id="IPR016484">
    <property type="entry name" value="GTPase_Der"/>
</dbReference>
<dbReference type="InterPro" id="IPR032859">
    <property type="entry name" value="KH_dom-like"/>
</dbReference>
<dbReference type="InterPro" id="IPR015946">
    <property type="entry name" value="KH_dom-like_a/b"/>
</dbReference>
<dbReference type="InterPro" id="IPR027417">
    <property type="entry name" value="P-loop_NTPase"/>
</dbReference>
<dbReference type="InterPro" id="IPR005225">
    <property type="entry name" value="Small_GTP-bd"/>
</dbReference>
<dbReference type="NCBIfam" id="TIGR03594">
    <property type="entry name" value="GTPase_EngA"/>
    <property type="match status" value="1"/>
</dbReference>
<dbReference type="NCBIfam" id="TIGR00231">
    <property type="entry name" value="small_GTP"/>
    <property type="match status" value="2"/>
</dbReference>
<dbReference type="PANTHER" id="PTHR43834">
    <property type="entry name" value="GTPASE DER"/>
    <property type="match status" value="1"/>
</dbReference>
<dbReference type="PANTHER" id="PTHR43834:SF6">
    <property type="entry name" value="GTPASE DER"/>
    <property type="match status" value="1"/>
</dbReference>
<dbReference type="Pfam" id="PF14714">
    <property type="entry name" value="KH_dom-like"/>
    <property type="match status" value="1"/>
</dbReference>
<dbReference type="Pfam" id="PF01926">
    <property type="entry name" value="MMR_HSR1"/>
    <property type="match status" value="2"/>
</dbReference>
<dbReference type="PIRSF" id="PIRSF006485">
    <property type="entry name" value="GTP-binding_EngA"/>
    <property type="match status" value="1"/>
</dbReference>
<dbReference type="PRINTS" id="PR00326">
    <property type="entry name" value="GTP1OBG"/>
</dbReference>
<dbReference type="SMART" id="SM00382">
    <property type="entry name" value="AAA"/>
    <property type="match status" value="2"/>
</dbReference>
<dbReference type="SUPFAM" id="SSF52540">
    <property type="entry name" value="P-loop containing nucleoside triphosphate hydrolases"/>
    <property type="match status" value="2"/>
</dbReference>
<dbReference type="PROSITE" id="PS51712">
    <property type="entry name" value="G_ENGA"/>
    <property type="match status" value="2"/>
</dbReference>
<protein>
    <recommendedName>
        <fullName evidence="1">GTPase Der</fullName>
    </recommendedName>
    <alternativeName>
        <fullName evidence="1">GTP-binding protein EngA</fullName>
    </alternativeName>
</protein>
<proteinExistence type="inferred from homology"/>
<reference key="1">
    <citation type="journal article" date="2008" name="PLoS ONE">
        <title>Genome biology of Actinobacillus pleuropneumoniae JL03, an isolate of serotype 3 prevalent in China.</title>
        <authorList>
            <person name="Xu Z."/>
            <person name="Zhou Y."/>
            <person name="Li L."/>
            <person name="Zhou R."/>
            <person name="Xiao S."/>
            <person name="Wan Y."/>
            <person name="Zhang S."/>
            <person name="Wang K."/>
            <person name="Li W."/>
            <person name="Li L."/>
            <person name="Jin H."/>
            <person name="Kang M."/>
            <person name="Dalai B."/>
            <person name="Li T."/>
            <person name="Liu L."/>
            <person name="Cheng Y."/>
            <person name="Zhang L."/>
            <person name="Xu T."/>
            <person name="Zheng H."/>
            <person name="Pu S."/>
            <person name="Wang B."/>
            <person name="Gu W."/>
            <person name="Zhang X.L."/>
            <person name="Zhu G.-F."/>
            <person name="Wang S."/>
            <person name="Zhao G.-P."/>
            <person name="Chen H."/>
        </authorList>
    </citation>
    <scope>NUCLEOTIDE SEQUENCE [LARGE SCALE GENOMIC DNA]</scope>
    <source>
        <strain>JL03</strain>
    </source>
</reference>
<accession>B0BTQ8</accession>
<organism>
    <name type="scientific">Actinobacillus pleuropneumoniae serotype 3 (strain JL03)</name>
    <dbReference type="NCBI Taxonomy" id="434271"/>
    <lineage>
        <taxon>Bacteria</taxon>
        <taxon>Pseudomonadati</taxon>
        <taxon>Pseudomonadota</taxon>
        <taxon>Gammaproteobacteria</taxon>
        <taxon>Pasteurellales</taxon>
        <taxon>Pasteurellaceae</taxon>
        <taxon>Actinobacillus</taxon>
    </lineage>
</organism>
<comment type="function">
    <text evidence="1">GTPase that plays an essential role in the late steps of ribosome biogenesis.</text>
</comment>
<comment type="subunit">
    <text evidence="1">Associates with the 50S ribosomal subunit.</text>
</comment>
<comment type="similarity">
    <text evidence="1">Belongs to the TRAFAC class TrmE-Era-EngA-EngB-Septin-like GTPase superfamily. EngA (Der) GTPase family.</text>
</comment>
<gene>
    <name evidence="1" type="primary">der</name>
    <name type="synonym">engA</name>
    <name type="ordered locus">APJL_0424</name>
</gene>
<feature type="chain" id="PRO_1000099085" description="GTPase Der">
    <location>
        <begin position="1"/>
        <end position="506"/>
    </location>
</feature>
<feature type="domain" description="EngA-type G 1">
    <location>
        <begin position="3"/>
        <end position="166"/>
    </location>
</feature>
<feature type="domain" description="EngA-type G 2">
    <location>
        <begin position="218"/>
        <end position="391"/>
    </location>
</feature>
<feature type="domain" description="KH-like" evidence="1">
    <location>
        <begin position="392"/>
        <end position="476"/>
    </location>
</feature>
<feature type="binding site" evidence="1">
    <location>
        <begin position="9"/>
        <end position="16"/>
    </location>
    <ligand>
        <name>GTP</name>
        <dbReference type="ChEBI" id="CHEBI:37565"/>
        <label>1</label>
    </ligand>
</feature>
<feature type="binding site" evidence="1">
    <location>
        <begin position="56"/>
        <end position="60"/>
    </location>
    <ligand>
        <name>GTP</name>
        <dbReference type="ChEBI" id="CHEBI:37565"/>
        <label>1</label>
    </ligand>
</feature>
<feature type="binding site" evidence="1">
    <location>
        <begin position="118"/>
        <end position="121"/>
    </location>
    <ligand>
        <name>GTP</name>
        <dbReference type="ChEBI" id="CHEBI:37565"/>
        <label>1</label>
    </ligand>
</feature>
<feature type="binding site" evidence="1">
    <location>
        <begin position="224"/>
        <end position="231"/>
    </location>
    <ligand>
        <name>GTP</name>
        <dbReference type="ChEBI" id="CHEBI:37565"/>
        <label>2</label>
    </ligand>
</feature>
<feature type="binding site" evidence="1">
    <location>
        <begin position="271"/>
        <end position="275"/>
    </location>
    <ligand>
        <name>GTP</name>
        <dbReference type="ChEBI" id="CHEBI:37565"/>
        <label>2</label>
    </ligand>
</feature>
<feature type="binding site" evidence="1">
    <location>
        <begin position="336"/>
        <end position="339"/>
    </location>
    <ligand>
        <name>GTP</name>
        <dbReference type="ChEBI" id="CHEBI:37565"/>
        <label>2</label>
    </ligand>
</feature>
<keyword id="KW-0342">GTP-binding</keyword>
<keyword id="KW-0547">Nucleotide-binding</keyword>
<keyword id="KW-0677">Repeat</keyword>
<keyword id="KW-0690">Ribosome biogenesis</keyword>